<accession>P0ABG7</accession>
<accession>P13409</accession>
<accession>P15035</accession>
<evidence type="ECO:0000255" key="1"/>
<evidence type="ECO:0000255" key="2">
    <source>
        <dbReference type="HAMAP-Rule" id="MF_02079"/>
    </source>
</evidence>
<evidence type="ECO:0000269" key="3">
    <source>
    </source>
</evidence>
<evidence type="ECO:0000269" key="4">
    <source>
    </source>
</evidence>
<evidence type="ECO:0000269" key="5">
    <source>
    </source>
</evidence>
<evidence type="ECO:0000269" key="6">
    <source>
    </source>
</evidence>
<evidence type="ECO:0000269" key="7">
    <source>
    </source>
</evidence>
<evidence type="ECO:0000303" key="8">
    <source>
    </source>
</evidence>
<evidence type="ECO:0000303" key="9">
    <source>
    </source>
</evidence>
<evidence type="ECO:0000303" key="10">
    <source>
    </source>
</evidence>
<evidence type="ECO:0000303" key="11">
    <source>
    </source>
</evidence>
<evidence type="ECO:0000305" key="12"/>
<evidence type="ECO:0000305" key="13">
    <source>
    </source>
</evidence>
<evidence type="ECO:0007744" key="14">
    <source>
        <dbReference type="PDB" id="8TJ3"/>
    </source>
</evidence>
<evidence type="ECO:0007829" key="15">
    <source>
        <dbReference type="PDB" id="8TJ3"/>
    </source>
</evidence>
<reference key="1">
    <citation type="journal article" date="1989" name="J. Bacteriol.">
        <title>Nucleotide sequence of the rodA gene, responsible for the rod shape of Escherichia coli: rodA and the pbpA gene, encoding penicillin-binding protein 2, constitute the rodA operon.</title>
        <authorList>
            <person name="Matsuzawa H."/>
            <person name="Asoh S."/>
            <person name="Kunai K."/>
            <person name="Muraiso K."/>
            <person name="Takasuga A."/>
            <person name="Ohta T."/>
        </authorList>
    </citation>
    <scope>NUCLEOTIDE SEQUENCE [GENOMIC DNA]</scope>
    <scope>FUNCTION</scope>
    <source>
        <strain>K12</strain>
    </source>
</reference>
<reference key="2">
    <citation type="submission" date="1997-01" db="EMBL/GenBank/DDBJ databases">
        <title>Sequence of minutes 4-25 of Escherichia coli.</title>
        <authorList>
            <person name="Chung E."/>
            <person name="Allen E."/>
            <person name="Araujo R."/>
            <person name="Aparicio A.M."/>
            <person name="Davis K."/>
            <person name="Duncan M."/>
            <person name="Federspiel N."/>
            <person name="Hyman R."/>
            <person name="Kalman S."/>
            <person name="Komp C."/>
            <person name="Kurdi O."/>
            <person name="Lew H."/>
            <person name="Lin D."/>
            <person name="Namath A."/>
            <person name="Oefner P."/>
            <person name="Roberts D."/>
            <person name="Schramm S."/>
            <person name="Davis R.W."/>
        </authorList>
    </citation>
    <scope>NUCLEOTIDE SEQUENCE [LARGE SCALE GENOMIC DNA]</scope>
    <source>
        <strain>K12 / MG1655 / ATCC 47076</strain>
    </source>
</reference>
<reference key="3">
    <citation type="journal article" date="1996" name="DNA Res.">
        <title>A 718-kb DNA sequence of the Escherichia coli K-12 genome corresponding to the 12.7-28.0 min region on the linkage map.</title>
        <authorList>
            <person name="Oshima T."/>
            <person name="Aiba H."/>
            <person name="Baba T."/>
            <person name="Fujita K."/>
            <person name="Hayashi K."/>
            <person name="Honjo A."/>
            <person name="Ikemoto K."/>
            <person name="Inada T."/>
            <person name="Itoh T."/>
            <person name="Kajihara M."/>
            <person name="Kanai K."/>
            <person name="Kashimoto K."/>
            <person name="Kimura S."/>
            <person name="Kitagawa M."/>
            <person name="Makino K."/>
            <person name="Masuda S."/>
            <person name="Miki T."/>
            <person name="Mizobuchi K."/>
            <person name="Mori H."/>
            <person name="Motomura K."/>
            <person name="Nakamura Y."/>
            <person name="Nashimoto H."/>
            <person name="Nishio Y."/>
            <person name="Saito N."/>
            <person name="Sampei G."/>
            <person name="Seki Y."/>
            <person name="Tagami H."/>
            <person name="Takemoto K."/>
            <person name="Wada C."/>
            <person name="Yamamoto Y."/>
            <person name="Yano M."/>
            <person name="Horiuchi T."/>
        </authorList>
    </citation>
    <scope>NUCLEOTIDE SEQUENCE [LARGE SCALE GENOMIC DNA]</scope>
    <source>
        <strain>K12 / W3110 / ATCC 27325 / DSM 5911</strain>
    </source>
</reference>
<reference key="4">
    <citation type="journal article" date="1997" name="Science">
        <title>The complete genome sequence of Escherichia coli K-12.</title>
        <authorList>
            <person name="Blattner F.R."/>
            <person name="Plunkett G. III"/>
            <person name="Bloch C.A."/>
            <person name="Perna N.T."/>
            <person name="Burland V."/>
            <person name="Riley M."/>
            <person name="Collado-Vides J."/>
            <person name="Glasner J.D."/>
            <person name="Rode C.K."/>
            <person name="Mayhew G.F."/>
            <person name="Gregor J."/>
            <person name="Davis N.W."/>
            <person name="Kirkpatrick H.A."/>
            <person name="Goeden M.A."/>
            <person name="Rose D.J."/>
            <person name="Mau B."/>
            <person name="Shao Y."/>
        </authorList>
    </citation>
    <scope>NUCLEOTIDE SEQUENCE [LARGE SCALE GENOMIC DNA]</scope>
    <source>
        <strain>K12 / MG1655 / ATCC 47076</strain>
    </source>
</reference>
<reference key="5">
    <citation type="journal article" date="2006" name="Mol. Syst. Biol.">
        <title>Highly accurate genome sequences of Escherichia coli K-12 strains MG1655 and W3110.</title>
        <authorList>
            <person name="Hayashi K."/>
            <person name="Morooka N."/>
            <person name="Yamamoto Y."/>
            <person name="Fujita K."/>
            <person name="Isono K."/>
            <person name="Choi S."/>
            <person name="Ohtsubo E."/>
            <person name="Baba T."/>
            <person name="Wanner B.L."/>
            <person name="Mori H."/>
            <person name="Horiuchi T."/>
        </authorList>
    </citation>
    <scope>NUCLEOTIDE SEQUENCE [LARGE SCALE GENOMIC DNA]</scope>
    <source>
        <strain>K12 / W3110 / ATCC 27325 / DSM 5911</strain>
    </source>
</reference>
<reference key="6">
    <citation type="journal article" date="1987" name="J. Bacteriol.">
        <title>Genes encoding two lipoproteins in the leuS-dacA region of the Escherichia coli chromosome.</title>
        <authorList>
            <person name="Takase I."/>
            <person name="Ishino F."/>
            <person name="Wachi M."/>
            <person name="Kamata H."/>
            <person name="Doi M."/>
            <person name="Asoh S."/>
            <person name="Matsuzawa H."/>
            <person name="Ohta T."/>
            <person name="Matsuhashi M."/>
        </authorList>
    </citation>
    <scope>NUCLEOTIDE SEQUENCE [GENOMIC DNA] OF 355-370</scope>
</reference>
<reference key="7">
    <citation type="journal article" date="1980" name="J. Bacteriol.">
        <title>Cluster of mrdA and mrdB genes responsible for the rod shape and mecillinam sensitivity of Escherichia coli.</title>
        <authorList>
            <person name="Tamaki S."/>
            <person name="Matsuzawa H."/>
            <person name="Matsuhashi M."/>
        </authorList>
    </citation>
    <scope>DISRUPTION PHENOTYPE</scope>
    <source>
        <strain>K12</strain>
    </source>
</reference>
<reference key="8">
    <citation type="journal article" date="1983" name="J. Bacteriol.">
        <title>Identification of the rodA gene product of Escherichia coli.</title>
        <authorList>
            <person name="Stoker N.G."/>
            <person name="Pratt J.M."/>
            <person name="Spratt B.G."/>
        </authorList>
    </citation>
    <scope>SUBCELLULAR LOCATION</scope>
</reference>
<reference key="9">
    <citation type="journal article" date="2005" name="Science">
        <title>Global topology analysis of the Escherichia coli inner membrane proteome.</title>
        <authorList>
            <person name="Daley D.O."/>
            <person name="Rapp M."/>
            <person name="Granseth E."/>
            <person name="Melen K."/>
            <person name="Drew D."/>
            <person name="von Heijne G."/>
        </authorList>
    </citation>
    <scope>TOPOLOGY [LARGE SCALE ANALYSIS]</scope>
    <source>
        <strain>K12 / MG1655 / ATCC 47076</strain>
    </source>
</reference>
<reference key="10">
    <citation type="journal article" date="2016" name="Nat. Microbiol.">
        <title>Bacterial cell wall biogenesis is mediated by SEDS and PBP polymerase families functioning semi-autonomously.</title>
        <authorList>
            <person name="Cho H."/>
            <person name="Wivagg C.N."/>
            <person name="Kapoor M."/>
            <person name="Barry Z."/>
            <person name="Rohs P.D."/>
            <person name="Suh H."/>
            <person name="Marto J.A."/>
            <person name="Garner E.C."/>
            <person name="Bernhardt T.G."/>
        </authorList>
    </citation>
    <scope>FUNCTION</scope>
    <scope>CATALYTIC ACTIVITY</scope>
    <scope>PATHWAY</scope>
</reference>
<reference evidence="14" key="11">
    <citation type="journal article" date="2023" name="Nat. Commun.">
        <title>Structural basis of peptidoglycan synthesis by E. coli RodA-PBP2 complex.</title>
        <authorList>
            <person name="Nygaard R."/>
            <person name="Graham C.L.B."/>
            <person name="Belcher Dufrisne M."/>
            <person name="Colburn J.D."/>
            <person name="Pepe J."/>
            <person name="Hydorn M.A."/>
            <person name="Corradi S."/>
            <person name="Brown C.M."/>
            <person name="Ashraf K.U."/>
            <person name="Vickery O.N."/>
            <person name="Briggs N.S."/>
            <person name="Deering J.J."/>
            <person name="Kloss B."/>
            <person name="Botta B."/>
            <person name="Clarke O.B."/>
            <person name="Columbus L."/>
            <person name="Dworkin J."/>
            <person name="Stansfeld P.J."/>
            <person name="Roper D.I."/>
            <person name="Mancia F."/>
        </authorList>
    </citation>
    <scope>STRUCTURE BY ELECTRON MICROSCOPY (3.20 ANGSTROMS) OF FUSION CONSTRUCT OF MRDA AND MRDB/RODA</scope>
    <scope>FUNCTION</scope>
    <scope>CATALYTIC ACTIVITY</scope>
    <scope>ACTIVITY REGULATION</scope>
    <scope>REACTION MECHANISM</scope>
    <scope>PATHWAY</scope>
    <scope>SUBCELLULAR LOCATION</scope>
    <scope>TOPOLOGY</scope>
    <scope>MUTAGENESIS OF ARG-48; LYS-97; ARG-101; TRP-102; ARG-109; GLN-111; GLU-114; LYS-117; ASP-159; ARG-210; PRO-257; GLU-258; HIS-260; THR-261; ASP-262 AND SER-344</scope>
</reference>
<dbReference type="EC" id="2.4.99.28" evidence="2 4 5"/>
<dbReference type="EMBL" id="M22857">
    <property type="protein sequence ID" value="AAA24571.1"/>
    <property type="molecule type" value="Genomic_DNA"/>
</dbReference>
<dbReference type="EMBL" id="U82598">
    <property type="protein sequence ID" value="AAB40834.1"/>
    <property type="molecule type" value="Genomic_DNA"/>
</dbReference>
<dbReference type="EMBL" id="U00096">
    <property type="protein sequence ID" value="AAC73735.1"/>
    <property type="molecule type" value="Genomic_DNA"/>
</dbReference>
<dbReference type="EMBL" id="AP009048">
    <property type="protein sequence ID" value="BAA35277.1"/>
    <property type="molecule type" value="Genomic_DNA"/>
</dbReference>
<dbReference type="EMBL" id="M18276">
    <property type="protein sequence ID" value="AAA24551.1"/>
    <property type="molecule type" value="Genomic_DNA"/>
</dbReference>
<dbReference type="PIR" id="JT0500">
    <property type="entry name" value="BVECRD"/>
</dbReference>
<dbReference type="RefSeq" id="NP_415167.1">
    <property type="nucleotide sequence ID" value="NC_000913.3"/>
</dbReference>
<dbReference type="RefSeq" id="WP_000131719.1">
    <property type="nucleotide sequence ID" value="NZ_STEB01000031.1"/>
</dbReference>
<dbReference type="PDB" id="8TJ3">
    <property type="method" value="EM"/>
    <property type="resolution" value="3.20 A"/>
    <property type="chains" value="B=1-370"/>
</dbReference>
<dbReference type="PDBsum" id="8TJ3"/>
<dbReference type="SMR" id="P0ABG7"/>
<dbReference type="BioGRID" id="4259910">
    <property type="interactions" value="288"/>
</dbReference>
<dbReference type="ComplexPortal" id="CPX-5718">
    <property type="entry name" value="Elongasome complex"/>
</dbReference>
<dbReference type="DIP" id="DIP-48062N"/>
<dbReference type="FunCoup" id="P0ABG7">
    <property type="interactions" value="405"/>
</dbReference>
<dbReference type="IntAct" id="P0ABG7">
    <property type="interactions" value="2"/>
</dbReference>
<dbReference type="STRING" id="511145.b0634"/>
<dbReference type="TCDB" id="2.A.103.1.2">
    <property type="family name" value="the bacterial murein precursor exporter (mpe) family"/>
</dbReference>
<dbReference type="PaxDb" id="511145-b0634"/>
<dbReference type="EnsemblBacteria" id="AAC73735">
    <property type="protein sequence ID" value="AAC73735"/>
    <property type="gene ID" value="b0634"/>
</dbReference>
<dbReference type="GeneID" id="93776848"/>
<dbReference type="GeneID" id="945238"/>
<dbReference type="KEGG" id="ecj:JW0629"/>
<dbReference type="KEGG" id="eco:b0634"/>
<dbReference type="KEGG" id="ecoc:C3026_03170"/>
<dbReference type="PATRIC" id="fig|1411691.4.peg.1634"/>
<dbReference type="EchoBASE" id="EB0602"/>
<dbReference type="eggNOG" id="COG0772">
    <property type="taxonomic scope" value="Bacteria"/>
</dbReference>
<dbReference type="HOGENOM" id="CLU_029243_2_2_6"/>
<dbReference type="InParanoid" id="P0ABG7"/>
<dbReference type="OMA" id="PMMVAWY"/>
<dbReference type="OrthoDB" id="9768187at2"/>
<dbReference type="PhylomeDB" id="P0ABG7"/>
<dbReference type="BioCyc" id="EcoCyc:EG10607-MONOMER"/>
<dbReference type="BioCyc" id="MetaCyc:EG10607-MONOMER"/>
<dbReference type="UniPathway" id="UPA00219"/>
<dbReference type="PRO" id="PR:P0ABG7"/>
<dbReference type="Proteomes" id="UP000000625">
    <property type="component" value="Chromosome"/>
</dbReference>
<dbReference type="GO" id="GO:0032153">
    <property type="term" value="C:cell division site"/>
    <property type="evidence" value="ECO:0000318"/>
    <property type="project" value="GO_Central"/>
</dbReference>
<dbReference type="GO" id="GO:0005886">
    <property type="term" value="C:plasma membrane"/>
    <property type="evidence" value="ECO:0000314"/>
    <property type="project" value="UniProtKB"/>
</dbReference>
<dbReference type="GO" id="GO:0015648">
    <property type="term" value="F:lipid-linked peptidoglycan transporter activity"/>
    <property type="evidence" value="ECO:0000318"/>
    <property type="project" value="GO_Central"/>
</dbReference>
<dbReference type="GO" id="GO:0008955">
    <property type="term" value="F:peptidoglycan glycosyltransferase activity"/>
    <property type="evidence" value="ECO:0000314"/>
    <property type="project" value="UniProtKB"/>
</dbReference>
<dbReference type="GO" id="GO:0051301">
    <property type="term" value="P:cell division"/>
    <property type="evidence" value="ECO:0000318"/>
    <property type="project" value="GO_Central"/>
</dbReference>
<dbReference type="GO" id="GO:0009252">
    <property type="term" value="P:peptidoglycan biosynthetic process"/>
    <property type="evidence" value="ECO:0000314"/>
    <property type="project" value="UniProtKB"/>
</dbReference>
<dbReference type="GO" id="GO:0031504">
    <property type="term" value="P:peptidoglycan-based cell wall organization"/>
    <property type="evidence" value="ECO:0000314"/>
    <property type="project" value="UniProtKB"/>
</dbReference>
<dbReference type="GO" id="GO:0008360">
    <property type="term" value="P:regulation of cell shape"/>
    <property type="evidence" value="ECO:0000315"/>
    <property type="project" value="UniProtKB"/>
</dbReference>
<dbReference type="HAMAP" id="MF_02079">
    <property type="entry name" value="PGT_RodA"/>
    <property type="match status" value="1"/>
</dbReference>
<dbReference type="InterPro" id="IPR018365">
    <property type="entry name" value="Cell_cycle_FtsW-rel_CS"/>
</dbReference>
<dbReference type="InterPro" id="IPR001182">
    <property type="entry name" value="FtsW/RodA"/>
</dbReference>
<dbReference type="InterPro" id="IPR011923">
    <property type="entry name" value="RodA/MrdB"/>
</dbReference>
<dbReference type="NCBIfam" id="NF008060">
    <property type="entry name" value="PRK10794.1"/>
    <property type="match status" value="1"/>
</dbReference>
<dbReference type="NCBIfam" id="TIGR02210">
    <property type="entry name" value="rodA_shape"/>
    <property type="match status" value="1"/>
</dbReference>
<dbReference type="PANTHER" id="PTHR30474">
    <property type="entry name" value="CELL CYCLE PROTEIN"/>
    <property type="match status" value="1"/>
</dbReference>
<dbReference type="PANTHER" id="PTHR30474:SF1">
    <property type="entry name" value="PEPTIDOGLYCAN GLYCOSYLTRANSFERASE MRDB"/>
    <property type="match status" value="1"/>
</dbReference>
<dbReference type="Pfam" id="PF01098">
    <property type="entry name" value="FTSW_RODA_SPOVE"/>
    <property type="match status" value="1"/>
</dbReference>
<dbReference type="PROSITE" id="PS00428">
    <property type="entry name" value="FTSW_RODA_SPOVE"/>
    <property type="match status" value="1"/>
</dbReference>
<comment type="function">
    <text evidence="3 4 5">Peptidoglycan polymerase that is essential for cell wall elongation (PubMed:27643381, PubMed:37620344). Also required for the maintenance of the rod cell shape (PubMed:2644207). Functions probably in conjunction with the penicillin-binding protein 2 (mrdA) (PubMed:2644207, PubMed:27643381, PubMed:37620344).</text>
</comment>
<comment type="catalytic activity">
    <reaction evidence="2 4 5">
        <text>[GlcNAc-(1-&gt;4)-Mur2Ac(oyl-L-Ala-gamma-D-Glu-L-Lys-D-Ala-D-Ala)](n)-di-trans,octa-cis-undecaprenyl diphosphate + beta-D-GlcNAc-(1-&gt;4)-Mur2Ac(oyl-L-Ala-gamma-D-Glu-L-Lys-D-Ala-D-Ala)-di-trans,octa-cis-undecaprenyl diphosphate = [GlcNAc-(1-&gt;4)-Mur2Ac(oyl-L-Ala-gamma-D-Glu-L-Lys-D-Ala-D-Ala)](n+1)-di-trans,octa-cis-undecaprenyl diphosphate + di-trans,octa-cis-undecaprenyl diphosphate + H(+)</text>
        <dbReference type="Rhea" id="RHEA:23708"/>
        <dbReference type="Rhea" id="RHEA-COMP:9602"/>
        <dbReference type="Rhea" id="RHEA-COMP:9603"/>
        <dbReference type="ChEBI" id="CHEBI:15378"/>
        <dbReference type="ChEBI" id="CHEBI:58405"/>
        <dbReference type="ChEBI" id="CHEBI:60033"/>
        <dbReference type="ChEBI" id="CHEBI:78435"/>
        <dbReference type="EC" id="2.4.99.28"/>
    </reaction>
</comment>
<comment type="activity regulation">
    <text evidence="5">No effect on activity by EDTA indicating that the activity is not metal-dependent.</text>
</comment>
<comment type="pathway">
    <text evidence="2 4 5">Cell wall biogenesis; peptidoglycan biosynthesis.</text>
</comment>
<comment type="subcellular location">
    <subcellularLocation>
        <location evidence="2 7 13">Cell inner membrane</location>
        <topology evidence="2 13">Multi-pass membrane protein</topology>
    </subcellularLocation>
</comment>
<comment type="disruption phenotype">
    <text evidence="6">At 42 degrees Celsius, mutation causes formation of spherical cells and mecillinam resistance.</text>
</comment>
<comment type="similarity">
    <text evidence="2 12">Belongs to the SEDS family. MrdB/RodA subfamily.</text>
</comment>
<gene>
    <name evidence="2 10" type="primary">mrdB</name>
    <name evidence="11" type="synonym">rodA</name>
    <name type="ordered locus">b0634</name>
    <name type="ordered locus">JW0629</name>
</gene>
<keyword id="KW-0002">3D-structure</keyword>
<keyword id="KW-0997">Cell inner membrane</keyword>
<keyword id="KW-1003">Cell membrane</keyword>
<keyword id="KW-0133">Cell shape</keyword>
<keyword id="KW-0961">Cell wall biogenesis/degradation</keyword>
<keyword id="KW-0328">Glycosyltransferase</keyword>
<keyword id="KW-0472">Membrane</keyword>
<keyword id="KW-0573">Peptidoglycan synthesis</keyword>
<keyword id="KW-1185">Reference proteome</keyword>
<keyword id="KW-0808">Transferase</keyword>
<keyword id="KW-0812">Transmembrane</keyword>
<keyword id="KW-1133">Transmembrane helix</keyword>
<organism>
    <name type="scientific">Escherichia coli (strain K12)</name>
    <dbReference type="NCBI Taxonomy" id="83333"/>
    <lineage>
        <taxon>Bacteria</taxon>
        <taxon>Pseudomonadati</taxon>
        <taxon>Pseudomonadota</taxon>
        <taxon>Gammaproteobacteria</taxon>
        <taxon>Enterobacterales</taxon>
        <taxon>Enterobacteriaceae</taxon>
        <taxon>Escherichia</taxon>
    </lineage>
</organism>
<sequence length="370" mass="40476">MTDNPNKKTFWDKVHLDPTMLLILLALLVYSALVIWSASGQDIGMMERKIGQIAMGLVIMVVMAQIPPRVYEGWAPYLYIICIILLVAVDAFGAISKGAQRWLDLGIVRFQPSEIAKIAVPLMVARFINRDVCPPSLKNTGIALVLIFMPTLLVAAQPDLGTSILVALSGLFVLFLSGLSWRLIGVAVVLVAAFIPILWFFLMHDYQRQRVMMLLDPESDPLGAGYHIIQSKIAIGSGGLRGKGWLHGTQSQLEFLPERHTDFIFAVLAEELGLVGILILLALYILLIMRGLWIAARAQTTFGRVMAGGLMLILFVYVFVNIGMVSGILPVVGVPLPLVSYGGSALIVLMAGFGIVMSIHTHRKMLSKSV</sequence>
<proteinExistence type="evidence at protein level"/>
<protein>
    <recommendedName>
        <fullName evidence="2 12">Peptidoglycan glycosyltransferase MrdB</fullName>
        <shortName evidence="2 12">PGT</shortName>
        <ecNumber evidence="2 4 5">2.4.99.28</ecNumber>
    </recommendedName>
    <alternativeName>
        <fullName evidence="2 12">Cell elongation protein RodA</fullName>
    </alternativeName>
    <alternativeName>
        <fullName evidence="2 12">Cell wall polymerase</fullName>
    </alternativeName>
    <alternativeName>
        <fullName evidence="2 8">Peptidoglycan polymerase</fullName>
        <shortName evidence="2 8">PG polymerase</shortName>
    </alternativeName>
    <alternativeName>
        <fullName evidence="12">Rod shape-determining protein</fullName>
    </alternativeName>
    <alternativeName>
        <fullName evidence="9">Shape, elongation, division and sporulation glycosyltransferase RodA</fullName>
        <shortName evidence="9">SEDS GT RodA</shortName>
    </alternativeName>
</protein>
<name>RODA_ECOLI</name>
<feature type="chain" id="PRO_0000062715" description="Peptidoglycan glycosyltransferase MrdB">
    <location>
        <begin position="1"/>
        <end position="370"/>
    </location>
</feature>
<feature type="topological domain" description="Cytoplasmic" evidence="1 12">
    <location>
        <begin position="1"/>
        <end position="19"/>
    </location>
</feature>
<feature type="transmembrane region" description="Helical" evidence="1">
    <location>
        <begin position="20"/>
        <end position="40"/>
    </location>
</feature>
<feature type="topological domain" description="Periplasmic" evidence="1 12">
    <location>
        <begin position="41"/>
        <end position="49"/>
    </location>
</feature>
<feature type="transmembrane region" description="Helical" evidence="1">
    <location>
        <begin position="50"/>
        <end position="70"/>
    </location>
</feature>
<feature type="topological domain" description="Cytoplasmic" evidence="1 12">
    <location>
        <begin position="71"/>
        <end position="74"/>
    </location>
</feature>
<feature type="transmembrane region" description="Helical" evidence="1">
    <location>
        <begin position="75"/>
        <end position="95"/>
    </location>
</feature>
<feature type="topological domain" description="Periplasmic" evidence="1">
    <location>
        <begin position="96"/>
        <end position="111"/>
    </location>
</feature>
<feature type="transmembrane region" description="Helical" evidence="13">
    <location>
        <begin position="112"/>
        <end position="130"/>
    </location>
</feature>
<feature type="topological domain" description="Cytoplasmic" evidence="13">
    <location>
        <begin position="131"/>
        <end position="135"/>
    </location>
</feature>
<feature type="transmembrane region" description="Helical" evidence="1">
    <location>
        <begin position="136"/>
        <end position="156"/>
    </location>
</feature>
<feature type="topological domain" description="Periplasmic" evidence="1">
    <location>
        <begin position="157"/>
        <end position="159"/>
    </location>
</feature>
<feature type="transmembrane region" description="Helical" evidence="1">
    <location>
        <begin position="160"/>
        <end position="180"/>
    </location>
</feature>
<feature type="topological domain" description="Cytoplasmic" evidence="1">
    <location>
        <begin position="181"/>
        <end position="182"/>
    </location>
</feature>
<feature type="transmembrane region" description="Helical" evidence="1">
    <location>
        <begin position="183"/>
        <end position="203"/>
    </location>
</feature>
<feature type="topological domain" description="Periplasmic" evidence="1">
    <location>
        <begin position="204"/>
        <end position="262"/>
    </location>
</feature>
<feature type="transmembrane region" description="Helical" evidence="1">
    <location>
        <begin position="263"/>
        <end position="283"/>
    </location>
</feature>
<feature type="topological domain" description="Cytoplasmic" evidence="1">
    <location>
        <begin position="284"/>
        <end position="311"/>
    </location>
</feature>
<feature type="transmembrane region" description="Helical" evidence="1">
    <location>
        <begin position="312"/>
        <end position="332"/>
    </location>
</feature>
<feature type="topological domain" description="Periplasmic" evidence="1">
    <location>
        <begin position="333"/>
        <end position="335"/>
    </location>
</feature>
<feature type="transmembrane region" description="Helical" evidence="1">
    <location>
        <begin position="336"/>
        <end position="356"/>
    </location>
</feature>
<feature type="topological domain" description="Cytoplasmic" evidence="1">
    <location>
        <begin position="357"/>
        <end position="370"/>
    </location>
</feature>
<feature type="mutagenesis site" description="Loss of glycosyltransferase activity." evidence="5">
    <original>R</original>
    <variation>A</variation>
    <location>
        <position position="48"/>
    </location>
</feature>
<feature type="mutagenesis site" description="No effect on glycosyltransferase activity." evidence="5">
    <original>K</original>
    <variation>A</variation>
    <location>
        <position position="97"/>
    </location>
</feature>
<feature type="mutagenesis site" description="Significantly reduced glycosyltransferase activity." evidence="5">
    <original>R</original>
    <variation>A</variation>
    <location>
        <position position="101"/>
    </location>
</feature>
<feature type="mutagenesis site" description="Significantly reduced glycosyltransferase activity." evidence="5">
    <original>W</original>
    <variation>A</variation>
    <location>
        <position position="102"/>
    </location>
</feature>
<feature type="mutagenesis site" description="No effect on glycosyltransferase activity." evidence="5">
    <original>W</original>
    <variation>F</variation>
    <location>
        <position position="102"/>
    </location>
</feature>
<feature type="mutagenesis site" description="No effect on glycosyltransferase activity." evidence="5">
    <original>R</original>
    <variation>A</variation>
    <location>
        <position position="109"/>
    </location>
</feature>
<feature type="mutagenesis site" description="Significantly reduced glycosyltransferase activity." evidence="5">
    <original>Q</original>
    <variation>A</variation>
    <location>
        <position position="111"/>
    </location>
</feature>
<feature type="mutagenesis site" description="No effect on glycosyltransferase activity." evidence="5">
    <original>E</original>
    <variation>A</variation>
    <location>
        <position position="114"/>
    </location>
</feature>
<feature type="mutagenesis site" description="No effect on glycosyltransferase activity." evidence="5">
    <original>K</original>
    <variation>N</variation>
    <location>
        <position position="117"/>
    </location>
</feature>
<feature type="mutagenesis site" description="Significantly reduced glycosyltransferase activity." evidence="5">
    <original>D</original>
    <variation>V</variation>
    <location>
        <position position="159"/>
    </location>
</feature>
<feature type="mutagenesis site" description="Significantly reduced glycosyltransferase activity." evidence="5">
    <original>R</original>
    <variation>A</variation>
    <location>
        <position position="210"/>
    </location>
</feature>
<feature type="mutagenesis site" description="Loss of glycosyltransferase activity." evidence="5">
    <original>P</original>
    <variation>A</variation>
    <location>
        <position position="257"/>
    </location>
</feature>
<feature type="mutagenesis site" description="No effect on glycosyltransferase activity." evidence="5">
    <original>E</original>
    <variation>A</variation>
    <location>
        <position position="258"/>
    </location>
</feature>
<feature type="mutagenesis site" description="No effect on glycosyltransferase activity." evidence="5">
    <original>H</original>
    <variation>A</variation>
    <location>
        <position position="260"/>
    </location>
</feature>
<feature type="mutagenesis site" description="Significantly reduced glycosyltransferase activity." evidence="5">
    <original>T</original>
    <variation>S</variation>
    <location>
        <position position="261"/>
    </location>
</feature>
<feature type="mutagenesis site" description="Loss of glycosyltransferase activity." evidence="5">
    <original>D</original>
    <variation>A</variation>
    <location>
        <position position="262"/>
    </location>
</feature>
<feature type="mutagenesis site" description="No effect on glycosyltransferase activity." evidence="5">
    <original>S</original>
    <variation>A</variation>
    <location>
        <position position="344"/>
    </location>
</feature>
<feature type="helix" evidence="15">
    <location>
        <begin position="11"/>
        <end position="14"/>
    </location>
</feature>
<feature type="helix" evidence="15">
    <location>
        <begin position="18"/>
        <end position="38"/>
    </location>
</feature>
<feature type="helix" evidence="15">
    <location>
        <begin position="43"/>
        <end position="63"/>
    </location>
</feature>
<feature type="helix" evidence="15">
    <location>
        <begin position="68"/>
        <end position="90"/>
    </location>
</feature>
<feature type="helix" evidence="15">
    <location>
        <begin position="113"/>
        <end position="129"/>
    </location>
</feature>
<feature type="turn" evidence="15">
    <location>
        <begin position="137"/>
        <end position="139"/>
    </location>
</feature>
<feature type="helix" evidence="15">
    <location>
        <begin position="141"/>
        <end position="156"/>
    </location>
</feature>
<feature type="helix" evidence="15">
    <location>
        <begin position="161"/>
        <end position="177"/>
    </location>
</feature>
<feature type="helix" evidence="15">
    <location>
        <begin position="181"/>
        <end position="200"/>
    </location>
</feature>
<feature type="helix" evidence="15">
    <location>
        <begin position="205"/>
        <end position="215"/>
    </location>
</feature>
<feature type="strand" evidence="15">
    <location>
        <begin position="217"/>
        <end position="220"/>
    </location>
</feature>
<feature type="turn" evidence="15">
    <location>
        <begin position="221"/>
        <end position="223"/>
    </location>
</feature>
<feature type="helix" evidence="15">
    <location>
        <begin position="224"/>
        <end position="236"/>
    </location>
</feature>
<feature type="strand" evidence="15">
    <location>
        <begin position="254"/>
        <end position="257"/>
    </location>
</feature>
<feature type="turn" evidence="15">
    <location>
        <begin position="259"/>
        <end position="263"/>
    </location>
</feature>
<feature type="helix" evidence="15">
    <location>
        <begin position="264"/>
        <end position="295"/>
    </location>
</feature>
<feature type="helix" evidence="15">
    <location>
        <begin position="301"/>
        <end position="326"/>
    </location>
</feature>
<feature type="strand" evidence="15">
    <location>
        <begin position="339"/>
        <end position="341"/>
    </location>
</feature>
<feature type="helix" evidence="15">
    <location>
        <begin position="343"/>
        <end position="362"/>
    </location>
</feature>